<sequence>MENGGAGTLQIRQVLLFFVLLGMSQAGSETGNFLVMEELQSGSFVGNLAKTLGLEVSELSSRGARVVSNDNKECLQLDTNTGDLLLREMLDREELCGSNEPCVLYFQVLMKNPTQFLQIELQVRDINDHSPVFLEKEMLLEIPENSPVGAVFLLESAKDLDVGINAVKSYTINPNSHFHVKIRVNPDNRKYPELVLDKALDYEERPELSFILTALDGGSPPRSGTALVRVVVVDINDNSPEFEQAFYEVKILENSILGSLVVTVSAWDLDSGTNSELSYTFSHASEDIRKTFEINQKSGDITLTAPLDFEAIESYSIIIQATDGGGLFGKSTVRIQVMDVNDNAPEITVSSITSPIPENTPETVVMVFRIRDRDSGDNGKMVCSIPEDIPFVLKSSVNNYYTLETERPLDRESRAEYNITITVTDLGTPRLKTEHNITVLVSDVNDNAPAFTQTSYALFVRENNSPALHIGSISATDRDSGTNAQVNYSLLPSQDPHLPLASLVSINADNGHLFALRSLDYEALQGFQFRVGATDHGSPALSSEALVRVLVLDANDNSPFVLYPLQNGSAPCTELVPWAAEPGYLVTKVVAVDGDSGQNAWLSYQLLKATEPGLFGVWAHNGEVRTARLLSERDAAKHRLVVLVKDNGEPPRSATATLHVLLVDGFSQPYLPLPEAAPAQAQADSLTVYLVVALASVSSLFLFSVLLFVAVRLCRRSRAAPVGRCSVPEGPFPGHLVDVSGTGTLSQSYHYEVCVTGGSRSNKFKFLKPIIPNFLPQSTGSEVEENPPFQNNLGF</sequence>
<protein>
    <recommendedName>
        <fullName>Protocadherin beta-12</fullName>
        <shortName>PCDH-beta-12</shortName>
    </recommendedName>
</protein>
<gene>
    <name type="primary">PCDHB12</name>
</gene>
<evidence type="ECO:0000250" key="1"/>
<evidence type="ECO:0000255" key="2"/>
<evidence type="ECO:0000255" key="3">
    <source>
        <dbReference type="PROSITE-ProRule" id="PRU00043"/>
    </source>
</evidence>
<evidence type="ECO:0000303" key="4">
    <source>
    </source>
</evidence>
<organism>
    <name type="scientific">Homo sapiens</name>
    <name type="common">Human</name>
    <dbReference type="NCBI Taxonomy" id="9606"/>
    <lineage>
        <taxon>Eukaryota</taxon>
        <taxon>Metazoa</taxon>
        <taxon>Chordata</taxon>
        <taxon>Craniata</taxon>
        <taxon>Vertebrata</taxon>
        <taxon>Euteleostomi</taxon>
        <taxon>Mammalia</taxon>
        <taxon>Eutheria</taxon>
        <taxon>Euarchontoglires</taxon>
        <taxon>Primates</taxon>
        <taxon>Haplorrhini</taxon>
        <taxon>Catarrhini</taxon>
        <taxon>Hominidae</taxon>
        <taxon>Homo</taxon>
    </lineage>
</organism>
<reference key="1">
    <citation type="journal article" date="1999" name="Cell">
        <title>A striking organization of a large family of human neural cadherin-like cell adhesion genes.</title>
        <authorList>
            <person name="Wu Q."/>
            <person name="Maniatis T."/>
        </authorList>
    </citation>
    <scope>NUCLEOTIDE SEQUENCE [MRNA] (ISOFORM 1)</scope>
</reference>
<reference key="2">
    <citation type="journal article" date="2001" name="FEBS Lett.">
        <title>The human and murine protocadherin-beta one-exon gene families show high evolutionary conservation, despite the difference in gene number.</title>
        <authorList>
            <person name="Vanhalst K."/>
            <person name="Kools P."/>
            <person name="Vanden Eynde E."/>
            <person name="van Roy F."/>
        </authorList>
    </citation>
    <scope>NUCLEOTIDE SEQUENCE [MRNA] (ISOFORM 1)</scope>
</reference>
<reference key="3">
    <citation type="journal article" date="2004" name="Nat. Genet.">
        <title>Complete sequencing and characterization of 21,243 full-length human cDNAs.</title>
        <authorList>
            <person name="Ota T."/>
            <person name="Suzuki Y."/>
            <person name="Nishikawa T."/>
            <person name="Otsuki T."/>
            <person name="Sugiyama T."/>
            <person name="Irie R."/>
            <person name="Wakamatsu A."/>
            <person name="Hayashi K."/>
            <person name="Sato H."/>
            <person name="Nagai K."/>
            <person name="Kimura K."/>
            <person name="Makita H."/>
            <person name="Sekine M."/>
            <person name="Obayashi M."/>
            <person name="Nishi T."/>
            <person name="Shibahara T."/>
            <person name="Tanaka T."/>
            <person name="Ishii S."/>
            <person name="Yamamoto J."/>
            <person name="Saito K."/>
            <person name="Kawai Y."/>
            <person name="Isono Y."/>
            <person name="Nakamura Y."/>
            <person name="Nagahari K."/>
            <person name="Murakami K."/>
            <person name="Yasuda T."/>
            <person name="Iwayanagi T."/>
            <person name="Wagatsuma M."/>
            <person name="Shiratori A."/>
            <person name="Sudo H."/>
            <person name="Hosoiri T."/>
            <person name="Kaku Y."/>
            <person name="Kodaira H."/>
            <person name="Kondo H."/>
            <person name="Sugawara M."/>
            <person name="Takahashi M."/>
            <person name="Kanda K."/>
            <person name="Yokoi T."/>
            <person name="Furuya T."/>
            <person name="Kikkawa E."/>
            <person name="Omura Y."/>
            <person name="Abe K."/>
            <person name="Kamihara K."/>
            <person name="Katsuta N."/>
            <person name="Sato K."/>
            <person name="Tanikawa M."/>
            <person name="Yamazaki M."/>
            <person name="Ninomiya K."/>
            <person name="Ishibashi T."/>
            <person name="Yamashita H."/>
            <person name="Murakawa K."/>
            <person name="Fujimori K."/>
            <person name="Tanai H."/>
            <person name="Kimata M."/>
            <person name="Watanabe M."/>
            <person name="Hiraoka S."/>
            <person name="Chiba Y."/>
            <person name="Ishida S."/>
            <person name="Ono Y."/>
            <person name="Takiguchi S."/>
            <person name="Watanabe S."/>
            <person name="Yosida M."/>
            <person name="Hotuta T."/>
            <person name="Kusano J."/>
            <person name="Kanehori K."/>
            <person name="Takahashi-Fujii A."/>
            <person name="Hara H."/>
            <person name="Tanase T.-O."/>
            <person name="Nomura Y."/>
            <person name="Togiya S."/>
            <person name="Komai F."/>
            <person name="Hara R."/>
            <person name="Takeuchi K."/>
            <person name="Arita M."/>
            <person name="Imose N."/>
            <person name="Musashino K."/>
            <person name="Yuuki H."/>
            <person name="Oshima A."/>
            <person name="Sasaki N."/>
            <person name="Aotsuka S."/>
            <person name="Yoshikawa Y."/>
            <person name="Matsunawa H."/>
            <person name="Ichihara T."/>
            <person name="Shiohata N."/>
            <person name="Sano S."/>
            <person name="Moriya S."/>
            <person name="Momiyama H."/>
            <person name="Satoh N."/>
            <person name="Takami S."/>
            <person name="Terashima Y."/>
            <person name="Suzuki O."/>
            <person name="Nakagawa S."/>
            <person name="Senoh A."/>
            <person name="Mizoguchi H."/>
            <person name="Goto Y."/>
            <person name="Shimizu F."/>
            <person name="Wakebe H."/>
            <person name="Hishigaki H."/>
            <person name="Watanabe T."/>
            <person name="Sugiyama A."/>
            <person name="Takemoto M."/>
            <person name="Kawakami B."/>
            <person name="Yamazaki M."/>
            <person name="Watanabe K."/>
            <person name="Kumagai A."/>
            <person name="Itakura S."/>
            <person name="Fukuzumi Y."/>
            <person name="Fujimori Y."/>
            <person name="Komiyama M."/>
            <person name="Tashiro H."/>
            <person name="Tanigami A."/>
            <person name="Fujiwara T."/>
            <person name="Ono T."/>
            <person name="Yamada K."/>
            <person name="Fujii Y."/>
            <person name="Ozaki K."/>
            <person name="Hirao M."/>
            <person name="Ohmori Y."/>
            <person name="Kawabata A."/>
            <person name="Hikiji T."/>
            <person name="Kobatake N."/>
            <person name="Inagaki H."/>
            <person name="Ikema Y."/>
            <person name="Okamoto S."/>
            <person name="Okitani R."/>
            <person name="Kawakami T."/>
            <person name="Noguchi S."/>
            <person name="Itoh T."/>
            <person name="Shigeta K."/>
            <person name="Senba T."/>
            <person name="Matsumura K."/>
            <person name="Nakajima Y."/>
            <person name="Mizuno T."/>
            <person name="Morinaga M."/>
            <person name="Sasaki M."/>
            <person name="Togashi T."/>
            <person name="Oyama M."/>
            <person name="Hata H."/>
            <person name="Watanabe M."/>
            <person name="Komatsu T."/>
            <person name="Mizushima-Sugano J."/>
            <person name="Satoh T."/>
            <person name="Shirai Y."/>
            <person name="Takahashi Y."/>
            <person name="Nakagawa K."/>
            <person name="Okumura K."/>
            <person name="Nagase T."/>
            <person name="Nomura N."/>
            <person name="Kikuchi H."/>
            <person name="Masuho Y."/>
            <person name="Yamashita R."/>
            <person name="Nakai K."/>
            <person name="Yada T."/>
            <person name="Nakamura Y."/>
            <person name="Ohara O."/>
            <person name="Isogai T."/>
            <person name="Sugano S."/>
        </authorList>
    </citation>
    <scope>NUCLEOTIDE SEQUENCE [LARGE SCALE MRNA] (ISOFORM 2)</scope>
    <source>
        <tissue>Brain</tissue>
    </source>
</reference>
<reference key="4">
    <citation type="journal article" date="2004" name="Nature">
        <title>The DNA sequence and comparative analysis of human chromosome 5.</title>
        <authorList>
            <person name="Schmutz J."/>
            <person name="Martin J."/>
            <person name="Terry A."/>
            <person name="Couronne O."/>
            <person name="Grimwood J."/>
            <person name="Lowry S."/>
            <person name="Gordon L.A."/>
            <person name="Scott D."/>
            <person name="Xie G."/>
            <person name="Huang W."/>
            <person name="Hellsten U."/>
            <person name="Tran-Gyamfi M."/>
            <person name="She X."/>
            <person name="Prabhakar S."/>
            <person name="Aerts A."/>
            <person name="Altherr M."/>
            <person name="Bajorek E."/>
            <person name="Black S."/>
            <person name="Branscomb E."/>
            <person name="Caoile C."/>
            <person name="Challacombe J.F."/>
            <person name="Chan Y.M."/>
            <person name="Denys M."/>
            <person name="Detter J.C."/>
            <person name="Escobar J."/>
            <person name="Flowers D."/>
            <person name="Fotopulos D."/>
            <person name="Glavina T."/>
            <person name="Gomez M."/>
            <person name="Gonzales E."/>
            <person name="Goodstein D."/>
            <person name="Grigoriev I."/>
            <person name="Groza M."/>
            <person name="Hammon N."/>
            <person name="Hawkins T."/>
            <person name="Haydu L."/>
            <person name="Israni S."/>
            <person name="Jett J."/>
            <person name="Kadner K."/>
            <person name="Kimball H."/>
            <person name="Kobayashi A."/>
            <person name="Lopez F."/>
            <person name="Lou Y."/>
            <person name="Martinez D."/>
            <person name="Medina C."/>
            <person name="Morgan J."/>
            <person name="Nandkeshwar R."/>
            <person name="Noonan J.P."/>
            <person name="Pitluck S."/>
            <person name="Pollard M."/>
            <person name="Predki P."/>
            <person name="Priest J."/>
            <person name="Ramirez L."/>
            <person name="Retterer J."/>
            <person name="Rodriguez A."/>
            <person name="Rogers S."/>
            <person name="Salamov A."/>
            <person name="Salazar A."/>
            <person name="Thayer N."/>
            <person name="Tice H."/>
            <person name="Tsai M."/>
            <person name="Ustaszewska A."/>
            <person name="Vo N."/>
            <person name="Wheeler J."/>
            <person name="Wu K."/>
            <person name="Yang J."/>
            <person name="Dickson M."/>
            <person name="Cheng J.-F."/>
            <person name="Eichler E.E."/>
            <person name="Olsen A."/>
            <person name="Pennacchio L.A."/>
            <person name="Rokhsar D.S."/>
            <person name="Richardson P."/>
            <person name="Lucas S.M."/>
            <person name="Myers R.M."/>
            <person name="Rubin E.M."/>
        </authorList>
    </citation>
    <scope>NUCLEOTIDE SEQUENCE [LARGE SCALE GENOMIC DNA]</scope>
</reference>
<reference key="5">
    <citation type="journal article" date="2004" name="Genome Res.">
        <title>The status, quality, and expansion of the NIH full-length cDNA project: the Mammalian Gene Collection (MGC).</title>
        <authorList>
            <consortium name="The MGC Project Team"/>
        </authorList>
    </citation>
    <scope>NUCLEOTIDE SEQUENCE [LARGE SCALE MRNA] (ISOFORM 1)</scope>
    <source>
        <tissue>Brain</tissue>
    </source>
</reference>
<feature type="signal peptide" evidence="2">
    <location>
        <begin position="1"/>
        <end position="26"/>
    </location>
</feature>
<feature type="chain" id="PRO_0000003936" description="Protocadherin beta-12">
    <location>
        <begin position="27"/>
        <end position="795"/>
    </location>
</feature>
<feature type="topological domain" description="Extracellular" evidence="2">
    <location>
        <begin position="27"/>
        <end position="690"/>
    </location>
</feature>
<feature type="transmembrane region" description="Helical" evidence="2">
    <location>
        <begin position="691"/>
        <end position="711"/>
    </location>
</feature>
<feature type="topological domain" description="Cytoplasmic" evidence="2">
    <location>
        <begin position="712"/>
        <end position="795"/>
    </location>
</feature>
<feature type="domain" description="Cadherin 1" evidence="3">
    <location>
        <begin position="35"/>
        <end position="133"/>
    </location>
</feature>
<feature type="domain" description="Cadherin 2" evidence="3">
    <location>
        <begin position="138"/>
        <end position="242"/>
    </location>
</feature>
<feature type="domain" description="Cadherin 3" evidence="3">
    <location>
        <begin position="247"/>
        <end position="347"/>
    </location>
</feature>
<feature type="domain" description="Cadherin 4" evidence="3">
    <location>
        <begin position="352"/>
        <end position="451"/>
    </location>
</feature>
<feature type="domain" description="Cadherin 5" evidence="3">
    <location>
        <begin position="456"/>
        <end position="561"/>
    </location>
</feature>
<feature type="domain" description="Cadherin 6" evidence="3">
    <location>
        <begin position="568"/>
        <end position="671"/>
    </location>
</feature>
<feature type="glycosylation site" description="N-linked (GlcNAc...) asparagine" evidence="2">
    <location>
        <position position="418"/>
    </location>
</feature>
<feature type="glycosylation site" description="N-linked (GlcNAc...) asparagine" evidence="2">
    <location>
        <position position="436"/>
    </location>
</feature>
<feature type="glycosylation site" description="N-linked (GlcNAc...) asparagine" evidence="2">
    <location>
        <position position="487"/>
    </location>
</feature>
<feature type="glycosylation site" description="N-linked (GlcNAc...) asparagine" evidence="2">
    <location>
        <position position="567"/>
    </location>
</feature>
<feature type="splice variant" id="VSP_053862" description="In isoform 2." evidence="4">
    <location>
        <begin position="1"/>
        <end position="337"/>
    </location>
</feature>
<feature type="sequence variant" id="VAR_033710" description="In dbSNP:rs2910327.">
    <original>T</original>
    <variation>I</variation>
    <location>
        <position position="420"/>
    </location>
</feature>
<feature type="sequence variant" id="VAR_048554" description="In dbSNP:rs2910006.">
    <original>K</original>
    <variation>E</variation>
    <location>
        <position position="763"/>
    </location>
</feature>
<dbReference type="EMBL" id="AF152491">
    <property type="protein sequence ID" value="AAD43752.1"/>
    <property type="molecule type" value="mRNA"/>
</dbReference>
<dbReference type="EMBL" id="AF217746">
    <property type="protein sequence ID" value="AAK51614.1"/>
    <property type="molecule type" value="mRNA"/>
</dbReference>
<dbReference type="EMBL" id="AK293336">
    <property type="protein sequence ID" value="BAG56852.1"/>
    <property type="molecule type" value="mRNA"/>
</dbReference>
<dbReference type="EMBL" id="AK316160">
    <property type="protein sequence ID" value="BAH14531.1"/>
    <property type="molecule type" value="mRNA"/>
</dbReference>
<dbReference type="EMBL" id="AC005752">
    <property type="status" value="NOT_ANNOTATED_CDS"/>
    <property type="molecule type" value="Genomic_DNA"/>
</dbReference>
<dbReference type="EMBL" id="BC045637">
    <property type="protein sequence ID" value="AAH45637.1"/>
    <property type="molecule type" value="mRNA"/>
</dbReference>
<dbReference type="CCDS" id="CCDS4254.1">
    <molecule id="Q9Y5F1-1"/>
</dbReference>
<dbReference type="RefSeq" id="NP_061755.1">
    <molecule id="Q9Y5F1-1"/>
    <property type="nucleotide sequence ID" value="NM_018932.4"/>
</dbReference>
<dbReference type="SMR" id="Q9Y5F1"/>
<dbReference type="BioGRID" id="121064">
    <property type="interactions" value="15"/>
</dbReference>
<dbReference type="FunCoup" id="Q9Y5F1">
    <property type="interactions" value="53"/>
</dbReference>
<dbReference type="IntAct" id="Q9Y5F1">
    <property type="interactions" value="11"/>
</dbReference>
<dbReference type="STRING" id="9606.ENSP00000239450"/>
<dbReference type="GlyCosmos" id="Q9Y5F1">
    <property type="glycosylation" value="4 sites, No reported glycans"/>
</dbReference>
<dbReference type="GlyGen" id="Q9Y5F1">
    <property type="glycosylation" value="4 sites"/>
</dbReference>
<dbReference type="iPTMnet" id="Q9Y5F1"/>
<dbReference type="PhosphoSitePlus" id="Q9Y5F1"/>
<dbReference type="BioMuta" id="PCDHB12"/>
<dbReference type="DMDM" id="13431382"/>
<dbReference type="jPOST" id="Q9Y5F1"/>
<dbReference type="MassIVE" id="Q9Y5F1"/>
<dbReference type="PaxDb" id="9606-ENSP00000239450"/>
<dbReference type="PeptideAtlas" id="Q9Y5F1"/>
<dbReference type="ProteomicsDB" id="3891"/>
<dbReference type="ProteomicsDB" id="86350">
    <molecule id="Q9Y5F1-1"/>
</dbReference>
<dbReference type="Antibodypedia" id="27227">
    <property type="antibodies" value="104 antibodies from 22 providers"/>
</dbReference>
<dbReference type="DNASU" id="56124"/>
<dbReference type="Ensembl" id="ENST00000239450.4">
    <molecule id="Q9Y5F1-1"/>
    <property type="protein sequence ID" value="ENSP00000239450.2"/>
    <property type="gene ID" value="ENSG00000120328.6"/>
</dbReference>
<dbReference type="Ensembl" id="ENST00000624949.1">
    <molecule id="Q9Y5F1-2"/>
    <property type="protein sequence ID" value="ENSP00000485303.1"/>
    <property type="gene ID" value="ENSG00000120328.6"/>
</dbReference>
<dbReference type="Ensembl" id="ENST00000708380.1">
    <molecule id="Q9Y5F1-2"/>
    <property type="protein sequence ID" value="ENSP00000517200.1"/>
    <property type="gene ID" value="ENSG00000291691.1"/>
</dbReference>
<dbReference type="Ensembl" id="ENST00000708382.1">
    <molecule id="Q9Y5F1-1"/>
    <property type="protein sequence ID" value="ENSP00000517202.1"/>
    <property type="gene ID" value="ENSG00000291691.1"/>
</dbReference>
<dbReference type="GeneID" id="56124"/>
<dbReference type="KEGG" id="hsa:56124"/>
<dbReference type="MANE-Select" id="ENST00000239450.4">
    <property type="protein sequence ID" value="ENSP00000239450.2"/>
    <property type="RefSeq nucleotide sequence ID" value="NM_018932.4"/>
    <property type="RefSeq protein sequence ID" value="NP_061755.1"/>
</dbReference>
<dbReference type="UCSC" id="uc003liz.4">
    <molecule id="Q9Y5F1-1"/>
    <property type="organism name" value="human"/>
</dbReference>
<dbReference type="AGR" id="HGNC:8683"/>
<dbReference type="CTD" id="56124"/>
<dbReference type="GeneCards" id="PCDHB12"/>
<dbReference type="HGNC" id="HGNC:8683">
    <property type="gene designation" value="PCDHB12"/>
</dbReference>
<dbReference type="HPA" id="ENSG00000120328">
    <property type="expression patterns" value="Low tissue specificity"/>
</dbReference>
<dbReference type="MIM" id="604967">
    <property type="type" value="gene"/>
</dbReference>
<dbReference type="MIM" id="606338">
    <property type="type" value="gene"/>
</dbReference>
<dbReference type="neXtProt" id="NX_Q9Y5F1"/>
<dbReference type="OpenTargets" id="ENSG00000120328"/>
<dbReference type="PharmGKB" id="PA33028"/>
<dbReference type="VEuPathDB" id="HostDB:ENSG00000120328"/>
<dbReference type="eggNOG" id="KOG3594">
    <property type="taxonomic scope" value="Eukaryota"/>
</dbReference>
<dbReference type="GeneTree" id="ENSGT00940000163201"/>
<dbReference type="HOGENOM" id="CLU_558484_0_0_1"/>
<dbReference type="InParanoid" id="Q9Y5F1"/>
<dbReference type="OMA" id="QYEVCVT"/>
<dbReference type="OrthoDB" id="6252479at2759"/>
<dbReference type="PAN-GO" id="Q9Y5F1">
    <property type="GO annotations" value="2 GO annotations based on evolutionary models"/>
</dbReference>
<dbReference type="PhylomeDB" id="Q9Y5F1"/>
<dbReference type="TreeFam" id="TF332299"/>
<dbReference type="PathwayCommons" id="Q9Y5F1"/>
<dbReference type="SignaLink" id="Q9Y5F1"/>
<dbReference type="BioGRID-ORCS" id="56124">
    <property type="hits" value="11 hits in 1105 CRISPR screens"/>
</dbReference>
<dbReference type="GeneWiki" id="PCDHB12"/>
<dbReference type="GenomeRNAi" id="56124"/>
<dbReference type="Pharos" id="Q9Y5F1">
    <property type="development level" value="Tdark"/>
</dbReference>
<dbReference type="PRO" id="PR:Q9Y5F1"/>
<dbReference type="Proteomes" id="UP000005640">
    <property type="component" value="Chromosome 5"/>
</dbReference>
<dbReference type="RNAct" id="Q9Y5F1">
    <property type="molecule type" value="protein"/>
</dbReference>
<dbReference type="Bgee" id="ENSG00000120328">
    <property type="expression patterns" value="Expressed in cortical plate and 98 other cell types or tissues"/>
</dbReference>
<dbReference type="ExpressionAtlas" id="Q9Y5F1">
    <property type="expression patterns" value="baseline and differential"/>
</dbReference>
<dbReference type="GO" id="GO:0005886">
    <property type="term" value="C:plasma membrane"/>
    <property type="evidence" value="ECO:0000318"/>
    <property type="project" value="GO_Central"/>
</dbReference>
<dbReference type="GO" id="GO:0005509">
    <property type="term" value="F:calcium ion binding"/>
    <property type="evidence" value="ECO:0007669"/>
    <property type="project" value="InterPro"/>
</dbReference>
<dbReference type="GO" id="GO:0007155">
    <property type="term" value="P:cell adhesion"/>
    <property type="evidence" value="ECO:0000318"/>
    <property type="project" value="GO_Central"/>
</dbReference>
<dbReference type="GO" id="GO:0007156">
    <property type="term" value="P:homophilic cell adhesion via plasma membrane adhesion molecules"/>
    <property type="evidence" value="ECO:0007669"/>
    <property type="project" value="InterPro"/>
</dbReference>
<dbReference type="GO" id="GO:0007399">
    <property type="term" value="P:nervous system development"/>
    <property type="evidence" value="ECO:0000304"/>
    <property type="project" value="ProtInc"/>
</dbReference>
<dbReference type="CDD" id="cd11304">
    <property type="entry name" value="Cadherin_repeat"/>
    <property type="match status" value="5"/>
</dbReference>
<dbReference type="FunFam" id="2.60.40.60:FF:000001">
    <property type="entry name" value="Protocadherin alpha 2"/>
    <property type="match status" value="1"/>
</dbReference>
<dbReference type="FunFam" id="2.60.40.60:FF:000002">
    <property type="entry name" value="Protocadherin alpha 2"/>
    <property type="match status" value="1"/>
</dbReference>
<dbReference type="FunFam" id="2.60.40.60:FF:000006">
    <property type="entry name" value="Protocadherin alpha 2"/>
    <property type="match status" value="1"/>
</dbReference>
<dbReference type="FunFam" id="2.60.40.60:FF:000046">
    <property type="entry name" value="Protocadherin beta 5"/>
    <property type="match status" value="1"/>
</dbReference>
<dbReference type="FunFam" id="2.60.40.60:FF:000309">
    <property type="entry name" value="Protocadherin beta-8"/>
    <property type="match status" value="1"/>
</dbReference>
<dbReference type="FunFam" id="2.60.40.60:FF:000018">
    <property type="entry name" value="Protocadherin gamma c3"/>
    <property type="match status" value="1"/>
</dbReference>
<dbReference type="Gene3D" id="2.60.40.60">
    <property type="entry name" value="Cadherins"/>
    <property type="match status" value="6"/>
</dbReference>
<dbReference type="InterPro" id="IPR002126">
    <property type="entry name" value="Cadherin-like_dom"/>
</dbReference>
<dbReference type="InterPro" id="IPR015919">
    <property type="entry name" value="Cadherin-like_sf"/>
</dbReference>
<dbReference type="InterPro" id="IPR032455">
    <property type="entry name" value="Cadherin_C"/>
</dbReference>
<dbReference type="InterPro" id="IPR020894">
    <property type="entry name" value="Cadherin_CS"/>
</dbReference>
<dbReference type="InterPro" id="IPR013164">
    <property type="entry name" value="Cadherin_N"/>
</dbReference>
<dbReference type="InterPro" id="IPR050174">
    <property type="entry name" value="Protocadherin/Cadherin-CA"/>
</dbReference>
<dbReference type="PANTHER" id="PTHR24028">
    <property type="entry name" value="CADHERIN-87A"/>
    <property type="match status" value="1"/>
</dbReference>
<dbReference type="PANTHER" id="PTHR24028:SF334">
    <property type="entry name" value="PROTOCADHERIN BETA-12"/>
    <property type="match status" value="1"/>
</dbReference>
<dbReference type="Pfam" id="PF00028">
    <property type="entry name" value="Cadherin"/>
    <property type="match status" value="5"/>
</dbReference>
<dbReference type="Pfam" id="PF08266">
    <property type="entry name" value="Cadherin_2"/>
    <property type="match status" value="1"/>
</dbReference>
<dbReference type="Pfam" id="PF16492">
    <property type="entry name" value="Cadherin_C_2"/>
    <property type="match status" value="1"/>
</dbReference>
<dbReference type="PRINTS" id="PR00205">
    <property type="entry name" value="CADHERIN"/>
</dbReference>
<dbReference type="SMART" id="SM00112">
    <property type="entry name" value="CA"/>
    <property type="match status" value="6"/>
</dbReference>
<dbReference type="SUPFAM" id="SSF49313">
    <property type="entry name" value="Cadherin-like"/>
    <property type="match status" value="6"/>
</dbReference>
<dbReference type="PROSITE" id="PS00232">
    <property type="entry name" value="CADHERIN_1"/>
    <property type="match status" value="5"/>
</dbReference>
<dbReference type="PROSITE" id="PS50268">
    <property type="entry name" value="CADHERIN_2"/>
    <property type="match status" value="6"/>
</dbReference>
<name>PCDBC_HUMAN</name>
<accession>Q9Y5F1</accession>
<accession>B4DDU1</accession>
<comment type="function">
    <text>Potential calcium-dependent cell-adhesion protein. May be involved in the establishment and maintenance of specific neuronal connections in the brain.</text>
</comment>
<comment type="interaction">
    <interactant intactId="EBI-12012016">
        <id>Q9Y5F1</id>
    </interactant>
    <interactant intactId="EBI-2548012">
        <id>Q9H2G9</id>
        <label>BLZF1</label>
    </interactant>
    <organismsDiffer>false</organismsDiffer>
    <experiments>3</experiments>
</comment>
<comment type="interaction">
    <interactant intactId="EBI-12012016">
        <id>Q9Y5F1</id>
    </interactant>
    <interactant intactId="EBI-2548868">
        <id>P0C7W6</id>
        <label>CCDC172</label>
    </interactant>
    <organismsDiffer>false</organismsDiffer>
    <experiments>3</experiments>
</comment>
<comment type="interaction">
    <interactant intactId="EBI-12012016">
        <id>Q9Y5F1</id>
    </interactant>
    <interactant intactId="EBI-742413">
        <id>Q9BT78</id>
        <label>COPS4</label>
    </interactant>
    <organismsDiffer>false</organismsDiffer>
    <experiments>3</experiments>
</comment>
<comment type="interaction">
    <interactant intactId="EBI-12012016">
        <id>Q9Y5F1</id>
    </interactant>
    <interactant intactId="EBI-359031">
        <id>Q15006</id>
        <label>EMC2</label>
    </interactant>
    <organismsDiffer>false</organismsDiffer>
    <experiments>3</experiments>
</comment>
<comment type="interaction">
    <interactant intactId="EBI-12012016">
        <id>Q9Y5F1</id>
    </interactant>
    <interactant intactId="EBI-1642161">
        <id>P23527</id>
        <label>H2BC17</label>
    </interactant>
    <organismsDiffer>false</organismsDiffer>
    <experiments>3</experiments>
</comment>
<comment type="interaction">
    <interactant intactId="EBI-12012016">
        <id>Q9Y5F1</id>
    </interactant>
    <interactant intactId="EBI-742756">
        <id>P08727</id>
        <label>KRT19</label>
    </interactant>
    <organismsDiffer>false</organismsDiffer>
    <experiments>3</experiments>
</comment>
<comment type="interaction">
    <interactant intactId="EBI-12012016">
        <id>Q9Y5F1</id>
    </interactant>
    <interactant intactId="EBI-11523636">
        <id>Q9Y6N9-4</id>
        <label>USH1C</label>
    </interactant>
    <organismsDiffer>false</organismsDiffer>
    <experiments>3</experiments>
</comment>
<comment type="interaction">
    <interactant intactId="EBI-12012016">
        <id>Q9Y5F1</id>
    </interactant>
    <interactant intactId="EBI-5667532">
        <id>Q3MJ62</id>
        <label>ZSCAN23</label>
    </interactant>
    <organismsDiffer>false</organismsDiffer>
    <experiments>3</experiments>
</comment>
<comment type="subcellular location">
    <subcellularLocation>
        <location evidence="1">Cell membrane</location>
        <topology evidence="1">Single-pass type I membrane protein</topology>
    </subcellularLocation>
</comment>
<comment type="alternative products">
    <event type="alternative splicing"/>
    <isoform>
        <id>Q9Y5F1-1</id>
        <name>1</name>
        <sequence type="displayed"/>
    </isoform>
    <isoform>
        <id>Q9Y5F1-2</id>
        <name>2</name>
        <sequence type="described" ref="VSP_053862"/>
    </isoform>
</comment>
<keyword id="KW-0025">Alternative splicing</keyword>
<keyword id="KW-0106">Calcium</keyword>
<keyword id="KW-0130">Cell adhesion</keyword>
<keyword id="KW-1003">Cell membrane</keyword>
<keyword id="KW-0325">Glycoprotein</keyword>
<keyword id="KW-0472">Membrane</keyword>
<keyword id="KW-1267">Proteomics identification</keyword>
<keyword id="KW-1185">Reference proteome</keyword>
<keyword id="KW-0677">Repeat</keyword>
<keyword id="KW-0732">Signal</keyword>
<keyword id="KW-0812">Transmembrane</keyword>
<keyword id="KW-1133">Transmembrane helix</keyword>
<proteinExistence type="evidence at protein level"/>